<reference key="1">
    <citation type="journal article" date="2009" name="J. Bacteriol.">
        <title>Complete genome sequence and comparative genome analysis of enteropathogenic Escherichia coli O127:H6 strain E2348/69.</title>
        <authorList>
            <person name="Iguchi A."/>
            <person name="Thomson N.R."/>
            <person name="Ogura Y."/>
            <person name="Saunders D."/>
            <person name="Ooka T."/>
            <person name="Henderson I.R."/>
            <person name="Harris D."/>
            <person name="Asadulghani M."/>
            <person name="Kurokawa K."/>
            <person name="Dean P."/>
            <person name="Kenny B."/>
            <person name="Quail M.A."/>
            <person name="Thurston S."/>
            <person name="Dougan G."/>
            <person name="Hayashi T."/>
            <person name="Parkhill J."/>
            <person name="Frankel G."/>
        </authorList>
    </citation>
    <scope>NUCLEOTIDE SEQUENCE [LARGE SCALE GENOMIC DNA]</scope>
    <source>
        <strain>E2348/69 / EPEC</strain>
    </source>
</reference>
<sequence length="450" mass="51493">MSLLQFSGLFVVWLLCTLFIATLTWFEFRRVRFNFNVFFSLLFLLTFFFGFPLTSVLVFRFDVGVAPPEILLQALLSAGCFYAVYYVTYKTRLRKRVADAPRRPLFTMNRVETNLTWVILMGIALVSVGIFFMHNGFLLFRLNSYSQIFSSEVSGVALKRFFYFFIPAMLVVYFLRQDSKAWLFFLVSTVAFGLLTYMIVGGTRANIIIAFAIFLFIGIIRGWISLWMLAAAGVLGIVGMFWLALKRYGMNVSGDEAFYTFLYLTRDTFSPWENLALLLQNYDNIDFQGLAPIVRDFYVFIPSWLWPGRPSMVLNSANYFTWEVLNNHSGLAISPTLIGSLVVMGGALFIPLGAIVVGLIIKWFDWLYELGNRETNRYKAAILHSFCFGAIFNMIVLAREGLDSFVSRVVFFIVVFGACLMIAKLLYWLFESAGLIHKRTKSSLRTQVEG</sequence>
<comment type="function">
    <text evidence="1">Probably involved in the polymerization of enterobacterial common antigen (ECA) trisaccharide repeat units.</text>
</comment>
<comment type="pathway">
    <text evidence="1">Bacterial outer membrane biogenesis; enterobacterial common antigen biosynthesis.</text>
</comment>
<comment type="subunit">
    <text evidence="1">Probably part of a complex composed of WzxE, WzyE and WzzE.</text>
</comment>
<comment type="subcellular location">
    <subcellularLocation>
        <location evidence="1">Cell inner membrane</location>
        <topology evidence="1">Multi-pass membrane protein</topology>
    </subcellularLocation>
</comment>
<comment type="similarity">
    <text evidence="1">Belongs to the WzyE family.</text>
</comment>
<evidence type="ECO:0000255" key="1">
    <source>
        <dbReference type="HAMAP-Rule" id="MF_01003"/>
    </source>
</evidence>
<proteinExistence type="inferred from homology"/>
<name>WZYE_ECO27</name>
<gene>
    <name evidence="1" type="primary">wzyE</name>
    <name type="ordered locus">E2348C_4095</name>
</gene>
<organism>
    <name type="scientific">Escherichia coli O127:H6 (strain E2348/69 / EPEC)</name>
    <dbReference type="NCBI Taxonomy" id="574521"/>
    <lineage>
        <taxon>Bacteria</taxon>
        <taxon>Pseudomonadati</taxon>
        <taxon>Pseudomonadota</taxon>
        <taxon>Gammaproteobacteria</taxon>
        <taxon>Enterobacterales</taxon>
        <taxon>Enterobacteriaceae</taxon>
        <taxon>Escherichia</taxon>
    </lineage>
</organism>
<dbReference type="EMBL" id="FM180568">
    <property type="protein sequence ID" value="CAS11643.1"/>
    <property type="molecule type" value="Genomic_DNA"/>
</dbReference>
<dbReference type="RefSeq" id="WP_000055119.1">
    <property type="nucleotide sequence ID" value="NC_011601.1"/>
</dbReference>
<dbReference type="KEGG" id="ecg:E2348C_4095"/>
<dbReference type="HOGENOM" id="CLU_049711_0_0_6"/>
<dbReference type="UniPathway" id="UPA00566"/>
<dbReference type="Proteomes" id="UP000008205">
    <property type="component" value="Chromosome"/>
</dbReference>
<dbReference type="GO" id="GO:0005886">
    <property type="term" value="C:plasma membrane"/>
    <property type="evidence" value="ECO:0007669"/>
    <property type="project" value="UniProtKB-SubCell"/>
</dbReference>
<dbReference type="GO" id="GO:0009246">
    <property type="term" value="P:enterobacterial common antigen biosynthetic process"/>
    <property type="evidence" value="ECO:0007669"/>
    <property type="project" value="UniProtKB-UniRule"/>
</dbReference>
<dbReference type="HAMAP" id="MF_01003">
    <property type="entry name" value="WzyE"/>
    <property type="match status" value="1"/>
</dbReference>
<dbReference type="InterPro" id="IPR010691">
    <property type="entry name" value="WzyE"/>
</dbReference>
<dbReference type="NCBIfam" id="NF002820">
    <property type="entry name" value="PRK02975.1"/>
    <property type="match status" value="1"/>
</dbReference>
<dbReference type="Pfam" id="PF06899">
    <property type="entry name" value="WzyE"/>
    <property type="match status" value="1"/>
</dbReference>
<keyword id="KW-0997">Cell inner membrane</keyword>
<keyword id="KW-1003">Cell membrane</keyword>
<keyword id="KW-0472">Membrane</keyword>
<keyword id="KW-1185">Reference proteome</keyword>
<keyword id="KW-0812">Transmembrane</keyword>
<keyword id="KW-1133">Transmembrane helix</keyword>
<feature type="chain" id="PRO_1000148787" description="Probable ECA polymerase">
    <location>
        <begin position="1"/>
        <end position="450"/>
    </location>
</feature>
<feature type="transmembrane region" description="Helical" evidence="1">
    <location>
        <begin position="6"/>
        <end position="26"/>
    </location>
</feature>
<feature type="transmembrane region" description="Helical" evidence="1">
    <location>
        <begin position="37"/>
        <end position="57"/>
    </location>
</feature>
<feature type="transmembrane region" description="Helical" evidence="1">
    <location>
        <begin position="63"/>
        <end position="83"/>
    </location>
</feature>
<feature type="transmembrane region" description="Helical" evidence="1">
    <location>
        <begin position="118"/>
        <end position="138"/>
    </location>
</feature>
<feature type="transmembrane region" description="Helical" evidence="1">
    <location>
        <begin position="155"/>
        <end position="175"/>
    </location>
</feature>
<feature type="transmembrane region" description="Helical" evidence="1">
    <location>
        <begin position="181"/>
        <end position="201"/>
    </location>
</feature>
<feature type="transmembrane region" description="Helical" evidence="1">
    <location>
        <begin position="207"/>
        <end position="227"/>
    </location>
</feature>
<feature type="transmembrane region" description="Helical" evidence="1">
    <location>
        <begin position="228"/>
        <end position="248"/>
    </location>
</feature>
<feature type="transmembrane region" description="Helical" evidence="1">
    <location>
        <begin position="341"/>
        <end position="361"/>
    </location>
</feature>
<feature type="transmembrane region" description="Helical" evidence="1">
    <location>
        <begin position="378"/>
        <end position="398"/>
    </location>
</feature>
<feature type="transmembrane region" description="Helical" evidence="1">
    <location>
        <begin position="410"/>
        <end position="430"/>
    </location>
</feature>
<protein>
    <recommendedName>
        <fullName evidence="1">Probable ECA polymerase</fullName>
    </recommendedName>
</protein>
<accession>B7UNB2</accession>